<evidence type="ECO:0000255" key="1">
    <source>
        <dbReference type="HAMAP-Rule" id="MF_00022"/>
    </source>
</evidence>
<evidence type="ECO:0000305" key="2"/>
<feature type="chain" id="PRO_0000119553" description="Glutamate--tRNA ligase">
    <location>
        <begin position="1"/>
        <end position="491"/>
    </location>
</feature>
<feature type="short sequence motif" description="'HIGH' region" evidence="1">
    <location>
        <begin position="10"/>
        <end position="20"/>
    </location>
</feature>
<feature type="short sequence motif" description="'KMSKS' region" evidence="1">
    <location>
        <begin position="243"/>
        <end position="247"/>
    </location>
</feature>
<feature type="binding site" evidence="1">
    <location>
        <position position="246"/>
    </location>
    <ligand>
        <name>ATP</name>
        <dbReference type="ChEBI" id="CHEBI:30616"/>
    </ligand>
</feature>
<organism>
    <name type="scientific">Desulfotalea psychrophila (strain LSv54 / DSM 12343)</name>
    <dbReference type="NCBI Taxonomy" id="177439"/>
    <lineage>
        <taxon>Bacteria</taxon>
        <taxon>Pseudomonadati</taxon>
        <taxon>Thermodesulfobacteriota</taxon>
        <taxon>Desulfobulbia</taxon>
        <taxon>Desulfobulbales</taxon>
        <taxon>Desulfocapsaceae</taxon>
        <taxon>Desulfotalea</taxon>
    </lineage>
</organism>
<sequence>MTETRLRFPPSPTGYLHIGGARTALYNWLYAKQHGGKLVLRIEDTDTERSTEESIKGIVDGLDWLGIDFDEGPYFQTDFASDHKSAAQKLLDSGQAYKCFCSKESLDEKREAALAAKKSLGYDGTCRNLTAEQIAEKEAAGAPYVLRFRVPECESVSYEDKIAGTIRVARSEIDDFVIVRSNGAPLYLLCNVVDDIRDRISHVIRGQDHMTNTIKQILLYEALDAPIPVFAHMPLTLDNKRAKISKRSHGEIVAVQFYRDHGFLPWALNNFLAMLGWSAGDDKEFYTKEELLKAFSLERINKSSSIFNYRKGDPKFFTDPKAISMNEHYIRNMDITELGKLVQKELEADGLWDTAYADEKADWYLATIDMIRARFHTLKDFATLGRAYFGEDYVVEEKPLKKNVLKFEGLKEWLPLLGERYASLDDFSAEETERVARELADELELKPGVIINGMRTAVTGQLAGPSMFDIVTTLGQERMVKRLREAGRLFA</sequence>
<dbReference type="EC" id="6.1.1.17" evidence="1"/>
<dbReference type="EMBL" id="CR522870">
    <property type="protein sequence ID" value="CAG37466.1"/>
    <property type="status" value="ALT_INIT"/>
    <property type="molecule type" value="Genomic_DNA"/>
</dbReference>
<dbReference type="RefSeq" id="WP_041278044.1">
    <property type="nucleotide sequence ID" value="NC_006138.1"/>
</dbReference>
<dbReference type="SMR" id="Q6AJL4"/>
<dbReference type="STRING" id="177439.DP2737"/>
<dbReference type="KEGG" id="dps:DP2737"/>
<dbReference type="eggNOG" id="COG0008">
    <property type="taxonomic scope" value="Bacteria"/>
</dbReference>
<dbReference type="HOGENOM" id="CLU_015768_6_3_7"/>
<dbReference type="OrthoDB" id="9807503at2"/>
<dbReference type="Proteomes" id="UP000000602">
    <property type="component" value="Chromosome"/>
</dbReference>
<dbReference type="GO" id="GO:0005829">
    <property type="term" value="C:cytosol"/>
    <property type="evidence" value="ECO:0007669"/>
    <property type="project" value="TreeGrafter"/>
</dbReference>
<dbReference type="GO" id="GO:0005524">
    <property type="term" value="F:ATP binding"/>
    <property type="evidence" value="ECO:0007669"/>
    <property type="project" value="UniProtKB-UniRule"/>
</dbReference>
<dbReference type="GO" id="GO:0004818">
    <property type="term" value="F:glutamate-tRNA ligase activity"/>
    <property type="evidence" value="ECO:0007669"/>
    <property type="project" value="UniProtKB-UniRule"/>
</dbReference>
<dbReference type="GO" id="GO:0000049">
    <property type="term" value="F:tRNA binding"/>
    <property type="evidence" value="ECO:0007669"/>
    <property type="project" value="InterPro"/>
</dbReference>
<dbReference type="GO" id="GO:0008270">
    <property type="term" value="F:zinc ion binding"/>
    <property type="evidence" value="ECO:0007669"/>
    <property type="project" value="InterPro"/>
</dbReference>
<dbReference type="GO" id="GO:0006424">
    <property type="term" value="P:glutamyl-tRNA aminoacylation"/>
    <property type="evidence" value="ECO:0007669"/>
    <property type="project" value="UniProtKB-UniRule"/>
</dbReference>
<dbReference type="CDD" id="cd00808">
    <property type="entry name" value="GluRS_core"/>
    <property type="match status" value="1"/>
</dbReference>
<dbReference type="FunFam" id="3.40.50.620:FF:000007">
    <property type="entry name" value="Glutamate--tRNA ligase"/>
    <property type="match status" value="1"/>
</dbReference>
<dbReference type="Gene3D" id="1.10.10.350">
    <property type="match status" value="1"/>
</dbReference>
<dbReference type="Gene3D" id="3.40.50.620">
    <property type="entry name" value="HUPs"/>
    <property type="match status" value="1"/>
</dbReference>
<dbReference type="HAMAP" id="MF_00022">
    <property type="entry name" value="Glu_tRNA_synth_type1"/>
    <property type="match status" value="1"/>
</dbReference>
<dbReference type="InterPro" id="IPR045462">
    <property type="entry name" value="aa-tRNA-synth_I_cd-bd"/>
</dbReference>
<dbReference type="InterPro" id="IPR020751">
    <property type="entry name" value="aa-tRNA-synth_I_codon-bd_sub2"/>
</dbReference>
<dbReference type="InterPro" id="IPR001412">
    <property type="entry name" value="aa-tRNA-synth_I_CS"/>
</dbReference>
<dbReference type="InterPro" id="IPR008925">
    <property type="entry name" value="aa_tRNA-synth_I_cd-bd_sf"/>
</dbReference>
<dbReference type="InterPro" id="IPR004527">
    <property type="entry name" value="Glu-tRNA-ligase_bac/mito"/>
</dbReference>
<dbReference type="InterPro" id="IPR000924">
    <property type="entry name" value="Glu/Gln-tRNA-synth"/>
</dbReference>
<dbReference type="InterPro" id="IPR020058">
    <property type="entry name" value="Glu/Gln-tRNA-synth_Ib_cat-dom"/>
</dbReference>
<dbReference type="InterPro" id="IPR049940">
    <property type="entry name" value="GluQ/Sye"/>
</dbReference>
<dbReference type="InterPro" id="IPR033910">
    <property type="entry name" value="GluRS_core"/>
</dbReference>
<dbReference type="InterPro" id="IPR014729">
    <property type="entry name" value="Rossmann-like_a/b/a_fold"/>
</dbReference>
<dbReference type="NCBIfam" id="TIGR00464">
    <property type="entry name" value="gltX_bact"/>
    <property type="match status" value="1"/>
</dbReference>
<dbReference type="PANTHER" id="PTHR43311">
    <property type="entry name" value="GLUTAMATE--TRNA LIGASE"/>
    <property type="match status" value="1"/>
</dbReference>
<dbReference type="PANTHER" id="PTHR43311:SF2">
    <property type="entry name" value="GLUTAMATE--TRNA LIGASE, MITOCHONDRIAL-RELATED"/>
    <property type="match status" value="1"/>
</dbReference>
<dbReference type="Pfam" id="PF19269">
    <property type="entry name" value="Anticodon_2"/>
    <property type="match status" value="1"/>
</dbReference>
<dbReference type="Pfam" id="PF00749">
    <property type="entry name" value="tRNA-synt_1c"/>
    <property type="match status" value="1"/>
</dbReference>
<dbReference type="PRINTS" id="PR00987">
    <property type="entry name" value="TRNASYNTHGLU"/>
</dbReference>
<dbReference type="SUPFAM" id="SSF48163">
    <property type="entry name" value="An anticodon-binding domain of class I aminoacyl-tRNA synthetases"/>
    <property type="match status" value="1"/>
</dbReference>
<dbReference type="SUPFAM" id="SSF52374">
    <property type="entry name" value="Nucleotidylyl transferase"/>
    <property type="match status" value="1"/>
</dbReference>
<dbReference type="PROSITE" id="PS00178">
    <property type="entry name" value="AA_TRNA_LIGASE_I"/>
    <property type="match status" value="1"/>
</dbReference>
<comment type="function">
    <text evidence="1">Catalyzes the attachment of glutamate to tRNA(Glu) in a two-step reaction: glutamate is first activated by ATP to form Glu-AMP and then transferred to the acceptor end of tRNA(Glu).</text>
</comment>
<comment type="catalytic activity">
    <reaction evidence="1">
        <text>tRNA(Glu) + L-glutamate + ATP = L-glutamyl-tRNA(Glu) + AMP + diphosphate</text>
        <dbReference type="Rhea" id="RHEA:23540"/>
        <dbReference type="Rhea" id="RHEA-COMP:9663"/>
        <dbReference type="Rhea" id="RHEA-COMP:9680"/>
        <dbReference type="ChEBI" id="CHEBI:29985"/>
        <dbReference type="ChEBI" id="CHEBI:30616"/>
        <dbReference type="ChEBI" id="CHEBI:33019"/>
        <dbReference type="ChEBI" id="CHEBI:78442"/>
        <dbReference type="ChEBI" id="CHEBI:78520"/>
        <dbReference type="ChEBI" id="CHEBI:456215"/>
        <dbReference type="EC" id="6.1.1.17"/>
    </reaction>
</comment>
<comment type="subunit">
    <text evidence="1">Monomer.</text>
</comment>
<comment type="subcellular location">
    <subcellularLocation>
        <location evidence="1">Cytoplasm</location>
    </subcellularLocation>
</comment>
<comment type="similarity">
    <text evidence="1">Belongs to the class-I aminoacyl-tRNA synthetase family. Glutamate--tRNA ligase type 1 subfamily.</text>
</comment>
<comment type="sequence caution" evidence="2">
    <conflict type="erroneous initiation">
        <sequence resource="EMBL-CDS" id="CAG37466"/>
    </conflict>
</comment>
<protein>
    <recommendedName>
        <fullName evidence="1">Glutamate--tRNA ligase</fullName>
        <ecNumber evidence="1">6.1.1.17</ecNumber>
    </recommendedName>
    <alternativeName>
        <fullName evidence="1">Glutamyl-tRNA synthetase</fullName>
        <shortName evidence="1">GluRS</shortName>
    </alternativeName>
</protein>
<accession>Q6AJL4</accession>
<gene>
    <name evidence="1" type="primary">gltX</name>
    <name type="ordered locus">DP2737</name>
</gene>
<name>SYE_DESPS</name>
<proteinExistence type="inferred from homology"/>
<reference key="1">
    <citation type="journal article" date="2004" name="Environ. Microbiol.">
        <title>The genome of Desulfotalea psychrophila, a sulfate-reducing bacterium from permanently cold Arctic sediments.</title>
        <authorList>
            <person name="Rabus R."/>
            <person name="Ruepp A."/>
            <person name="Frickey T."/>
            <person name="Rattei T."/>
            <person name="Fartmann B."/>
            <person name="Stark M."/>
            <person name="Bauer M."/>
            <person name="Zibat A."/>
            <person name="Lombardot T."/>
            <person name="Becker I."/>
            <person name="Amann J."/>
            <person name="Gellner K."/>
            <person name="Teeling H."/>
            <person name="Leuschner W.D."/>
            <person name="Gloeckner F.-O."/>
            <person name="Lupas A.N."/>
            <person name="Amann R."/>
            <person name="Klenk H.-P."/>
        </authorList>
    </citation>
    <scope>NUCLEOTIDE SEQUENCE [LARGE SCALE GENOMIC DNA]</scope>
    <source>
        <strain>DSM 12343 / LSv54</strain>
    </source>
</reference>
<keyword id="KW-0030">Aminoacyl-tRNA synthetase</keyword>
<keyword id="KW-0067">ATP-binding</keyword>
<keyword id="KW-0963">Cytoplasm</keyword>
<keyword id="KW-0436">Ligase</keyword>
<keyword id="KW-0547">Nucleotide-binding</keyword>
<keyword id="KW-0648">Protein biosynthesis</keyword>
<keyword id="KW-1185">Reference proteome</keyword>